<reference key="1">
    <citation type="journal article" date="1994" name="J. Gen. Virol.">
        <title>Nucleotide sequence of a 55 kbp region from the right end of the genome of a pathogenic African swine fever virus isolate (Malawi LIL20/1).</title>
        <authorList>
            <person name="Dixon L.K."/>
            <person name="Twigg S.R.F."/>
            <person name="Baylis S.A."/>
            <person name="Vydelingum S."/>
            <person name="Bristow C."/>
            <person name="Hammond J.M."/>
            <person name="Smith G.L."/>
        </authorList>
    </citation>
    <scope>NUCLEOTIDE SEQUENCE [GENOMIC DNA]</scope>
</reference>
<reference key="2">
    <citation type="submission" date="2003-03" db="EMBL/GenBank/DDBJ databases">
        <title>African swine fever virus genomes.</title>
        <authorList>
            <person name="Kutish G.F."/>
            <person name="Rock D.L."/>
        </authorList>
    </citation>
    <scope>NUCLEOTIDE SEQUENCE [LARGE SCALE GENOMIC DNA]</scope>
</reference>
<sequence length="205" mass="23659">MAMQKLFTYIYEFIEYRKMVLLEEKVPYDKFVQMVFNTGFFRINAETLNHGIVSVFIFGANGKYVHHGGDMRTLLTNTLNEKKQYEELILIVDKPILGKKNILDIIVEQRAANPTVVINIYPYHLFCINIPKVSAIPKHKLITQEEAQEFLGREYLQPQDLMQISASDPPVVWLGGRPGDFVQIERPSETAMHAVVIRFITKSKI</sequence>
<comment type="function">
    <text evidence="1">Component of the DNA-directed RNA polymerase (RNAP) that catalyzes the transcription in the cytoplasm of viral DNA into RNA using the four ribonucleoside triphosphates as substrates.</text>
</comment>
<comment type="subunit">
    <text evidence="2">Part of the viral DNA-directed RNA polymerase that consists of 8 polII-like subunits (RPB1, RPB2, RPB3, RPB5, RPB6, RPB7, RPB9, RPB10), a capping enzyme and a termination factor.</text>
</comment>
<comment type="subcellular location">
    <subcellularLocation>
        <location evidence="3">Host cytoplasm</location>
    </subcellularLocation>
    <subcellularLocation>
        <location evidence="2">Virion</location>
    </subcellularLocation>
    <text evidence="2">Found in association with viral nucleoid.</text>
</comment>
<comment type="similarity">
    <text evidence="3">Belongs to the archaeal RpoH/eukaryotic RPB5 RNA polymerase subunit family.</text>
</comment>
<organismHost>
    <name type="scientific">Ornithodoros</name>
    <name type="common">relapsing fever ticks</name>
    <dbReference type="NCBI Taxonomy" id="6937"/>
</organismHost>
<organismHost>
    <name type="scientific">Phacochoerus aethiopicus</name>
    <name type="common">Warthog</name>
    <dbReference type="NCBI Taxonomy" id="85517"/>
</organismHost>
<organismHost>
    <name type="scientific">Phacochoerus africanus</name>
    <name type="common">Warthog</name>
    <dbReference type="NCBI Taxonomy" id="41426"/>
</organismHost>
<organismHost>
    <name type="scientific">Potamochoerus larvatus</name>
    <name type="common">Bushpig</name>
    <dbReference type="NCBI Taxonomy" id="273792"/>
</organismHost>
<organismHost>
    <name type="scientific">Sus scrofa</name>
    <name type="common">Pig</name>
    <dbReference type="NCBI Taxonomy" id="9823"/>
</organismHost>
<gene>
    <name type="ordered locus">Mal-116</name>
    <name type="ORF">i2R</name>
</gene>
<dbReference type="EMBL" id="X71982">
    <property type="protein sequence ID" value="CAA50815.1"/>
    <property type="molecule type" value="Genomic_DNA"/>
</dbReference>
<dbReference type="EMBL" id="AY261361">
    <property type="status" value="NOT_ANNOTATED_CDS"/>
    <property type="molecule type" value="Genomic_DNA"/>
</dbReference>
<dbReference type="SMR" id="Q65224"/>
<dbReference type="Proteomes" id="UP000000860">
    <property type="component" value="Segment"/>
</dbReference>
<dbReference type="GO" id="GO:0000428">
    <property type="term" value="C:DNA-directed RNA polymerase complex"/>
    <property type="evidence" value="ECO:0007669"/>
    <property type="project" value="UniProtKB-KW"/>
</dbReference>
<dbReference type="GO" id="GO:0030430">
    <property type="term" value="C:host cell cytoplasm"/>
    <property type="evidence" value="ECO:0007669"/>
    <property type="project" value="UniProtKB-SubCell"/>
</dbReference>
<dbReference type="GO" id="GO:0044423">
    <property type="term" value="C:virion component"/>
    <property type="evidence" value="ECO:0007669"/>
    <property type="project" value="UniProtKB-KW"/>
</dbReference>
<dbReference type="GO" id="GO:0003677">
    <property type="term" value="F:DNA binding"/>
    <property type="evidence" value="ECO:0007669"/>
    <property type="project" value="InterPro"/>
</dbReference>
<dbReference type="GO" id="GO:0003899">
    <property type="term" value="F:DNA-directed RNA polymerase activity"/>
    <property type="evidence" value="ECO:0007669"/>
    <property type="project" value="InterPro"/>
</dbReference>
<dbReference type="GO" id="GO:0006366">
    <property type="term" value="P:transcription by RNA polymerase II"/>
    <property type="evidence" value="ECO:0007669"/>
    <property type="project" value="TreeGrafter"/>
</dbReference>
<dbReference type="GO" id="GO:0006362">
    <property type="term" value="P:transcription elongation by RNA polymerase I"/>
    <property type="evidence" value="ECO:0007669"/>
    <property type="project" value="TreeGrafter"/>
</dbReference>
<dbReference type="GO" id="GO:0042797">
    <property type="term" value="P:tRNA transcription by RNA polymerase III"/>
    <property type="evidence" value="ECO:0007669"/>
    <property type="project" value="TreeGrafter"/>
</dbReference>
<dbReference type="GO" id="GO:0019083">
    <property type="term" value="P:viral transcription"/>
    <property type="evidence" value="ECO:0007669"/>
    <property type="project" value="UniProtKB-KW"/>
</dbReference>
<dbReference type="Gene3D" id="3.90.940.20">
    <property type="entry name" value="RPB5-like RNA polymerase subunit"/>
    <property type="match status" value="1"/>
</dbReference>
<dbReference type="InterPro" id="IPR014381">
    <property type="entry name" value="Arch_Rpo5/euc_Rpb5"/>
</dbReference>
<dbReference type="InterPro" id="IPR000783">
    <property type="entry name" value="RNA_pol_subH/Rpb5_C"/>
</dbReference>
<dbReference type="InterPro" id="IPR035913">
    <property type="entry name" value="RPB5-like_sf"/>
</dbReference>
<dbReference type="PANTHER" id="PTHR10535">
    <property type="entry name" value="DNA-DIRECTED RNA POLYMERASES I, II, AND III SUBUNIT RPABC1"/>
    <property type="match status" value="1"/>
</dbReference>
<dbReference type="PANTHER" id="PTHR10535:SF0">
    <property type="entry name" value="DNA-DIRECTED RNA POLYMERASES I, II, AND III SUBUNIT RPABC1"/>
    <property type="match status" value="1"/>
</dbReference>
<dbReference type="Pfam" id="PF01191">
    <property type="entry name" value="RNA_pol_Rpb5_C"/>
    <property type="match status" value="1"/>
</dbReference>
<dbReference type="SUPFAM" id="SSF55287">
    <property type="entry name" value="RPB5-like RNA polymerase subunit"/>
    <property type="match status" value="1"/>
</dbReference>
<organism>
    <name type="scientific">African swine fever virus (isolate Tick/Malawi/Lil 20-1/1983)</name>
    <name type="common">ASFV</name>
    <dbReference type="NCBI Taxonomy" id="10500"/>
    <lineage>
        <taxon>Viruses</taxon>
        <taxon>Varidnaviria</taxon>
        <taxon>Bamfordvirae</taxon>
        <taxon>Nucleocytoviricota</taxon>
        <taxon>Pokkesviricetes</taxon>
        <taxon>Asfuvirales</taxon>
        <taxon>Asfarviridae</taxon>
        <taxon>Asfivirus</taxon>
        <taxon>African swine fever virus</taxon>
    </lineage>
</organism>
<protein>
    <recommendedName>
        <fullName evidence="2">DNA-directed RNA polymerase RPB5 homolog</fullName>
        <shortName evidence="3">RPB5 homolog</shortName>
    </recommendedName>
</protein>
<proteinExistence type="inferred from homology"/>
<accession>Q65224</accession>
<feature type="chain" id="PRO_0000373124" description="DNA-directed RNA polymerase RPB5 homolog">
    <location>
        <begin position="1"/>
        <end position="205"/>
    </location>
</feature>
<evidence type="ECO:0000250" key="1">
    <source>
        <dbReference type="UniProtKB" id="P19388"/>
    </source>
</evidence>
<evidence type="ECO:0000250" key="2">
    <source>
        <dbReference type="UniProtKB" id="Q65181"/>
    </source>
</evidence>
<evidence type="ECO:0000305" key="3"/>
<name>RPB5_ASFM2</name>
<keyword id="KW-0240">DNA-directed RNA polymerase</keyword>
<keyword id="KW-1035">Host cytoplasm</keyword>
<keyword id="KW-0804">Transcription</keyword>
<keyword id="KW-1195">Viral transcription</keyword>
<keyword id="KW-0946">Virion</keyword>